<accession>Q9CL72</accession>
<protein>
    <recommendedName>
        <fullName evidence="1">Proline--tRNA ligase</fullName>
        <ecNumber evidence="1">6.1.1.15</ecNumber>
    </recommendedName>
    <alternativeName>
        <fullName evidence="1">Prolyl-tRNA synthetase</fullName>
        <shortName evidence="1">ProRS</shortName>
    </alternativeName>
</protein>
<keyword id="KW-0030">Aminoacyl-tRNA synthetase</keyword>
<keyword id="KW-0067">ATP-binding</keyword>
<keyword id="KW-0963">Cytoplasm</keyword>
<keyword id="KW-0436">Ligase</keyword>
<keyword id="KW-0547">Nucleotide-binding</keyword>
<keyword id="KW-0648">Protein biosynthesis</keyword>
<keyword id="KW-1185">Reference proteome</keyword>
<organism>
    <name type="scientific">Pasteurella multocida (strain Pm70)</name>
    <dbReference type="NCBI Taxonomy" id="272843"/>
    <lineage>
        <taxon>Bacteria</taxon>
        <taxon>Pseudomonadati</taxon>
        <taxon>Pseudomonadota</taxon>
        <taxon>Gammaproteobacteria</taxon>
        <taxon>Pasteurellales</taxon>
        <taxon>Pasteurellaceae</taxon>
        <taxon>Pasteurella</taxon>
    </lineage>
</organism>
<reference key="1">
    <citation type="journal article" date="2001" name="Proc. Natl. Acad. Sci. U.S.A.">
        <title>Complete genomic sequence of Pasteurella multocida Pm70.</title>
        <authorList>
            <person name="May B.J."/>
            <person name="Zhang Q."/>
            <person name="Li L.L."/>
            <person name="Paustian M.L."/>
            <person name="Whittam T.S."/>
            <person name="Kapur V."/>
        </authorList>
    </citation>
    <scope>NUCLEOTIDE SEQUENCE [LARGE SCALE GENOMIC DNA]</scope>
    <source>
        <strain>Pm70</strain>
    </source>
</reference>
<feature type="chain" id="PRO_0000248733" description="Proline--tRNA ligase">
    <location>
        <begin position="1"/>
        <end position="571"/>
    </location>
</feature>
<name>SYP_PASMU</name>
<dbReference type="EC" id="6.1.1.15" evidence="1"/>
<dbReference type="EMBL" id="AE004439">
    <property type="protein sequence ID" value="AAK03454.1"/>
    <property type="molecule type" value="Genomic_DNA"/>
</dbReference>
<dbReference type="RefSeq" id="WP_005723980.1">
    <property type="nucleotide sequence ID" value="NC_002663.1"/>
</dbReference>
<dbReference type="SMR" id="Q9CL72"/>
<dbReference type="STRING" id="272843.PM1370"/>
<dbReference type="EnsemblBacteria" id="AAK03454">
    <property type="protein sequence ID" value="AAK03454"/>
    <property type="gene ID" value="PM1370"/>
</dbReference>
<dbReference type="KEGG" id="pmu:PM1370"/>
<dbReference type="PATRIC" id="fig|272843.6.peg.1382"/>
<dbReference type="HOGENOM" id="CLU_016739_0_0_6"/>
<dbReference type="OrthoDB" id="9809052at2"/>
<dbReference type="Proteomes" id="UP000000809">
    <property type="component" value="Chromosome"/>
</dbReference>
<dbReference type="GO" id="GO:0005829">
    <property type="term" value="C:cytosol"/>
    <property type="evidence" value="ECO:0007669"/>
    <property type="project" value="TreeGrafter"/>
</dbReference>
<dbReference type="GO" id="GO:0002161">
    <property type="term" value="F:aminoacyl-tRNA deacylase activity"/>
    <property type="evidence" value="ECO:0007669"/>
    <property type="project" value="InterPro"/>
</dbReference>
<dbReference type="GO" id="GO:0005524">
    <property type="term" value="F:ATP binding"/>
    <property type="evidence" value="ECO:0007669"/>
    <property type="project" value="UniProtKB-UniRule"/>
</dbReference>
<dbReference type="GO" id="GO:0004827">
    <property type="term" value="F:proline-tRNA ligase activity"/>
    <property type="evidence" value="ECO:0007669"/>
    <property type="project" value="UniProtKB-UniRule"/>
</dbReference>
<dbReference type="GO" id="GO:0006433">
    <property type="term" value="P:prolyl-tRNA aminoacylation"/>
    <property type="evidence" value="ECO:0007669"/>
    <property type="project" value="UniProtKB-UniRule"/>
</dbReference>
<dbReference type="CDD" id="cd04334">
    <property type="entry name" value="ProRS-INS"/>
    <property type="match status" value="1"/>
</dbReference>
<dbReference type="CDD" id="cd00861">
    <property type="entry name" value="ProRS_anticodon_short"/>
    <property type="match status" value="1"/>
</dbReference>
<dbReference type="CDD" id="cd00779">
    <property type="entry name" value="ProRS_core_prok"/>
    <property type="match status" value="1"/>
</dbReference>
<dbReference type="FunFam" id="3.30.930.10:FF:000043">
    <property type="entry name" value="Proline--tRNA ligase"/>
    <property type="match status" value="1"/>
</dbReference>
<dbReference type="FunFam" id="3.30.930.10:FF:000097">
    <property type="entry name" value="Proline--tRNA ligase"/>
    <property type="match status" value="1"/>
</dbReference>
<dbReference type="FunFam" id="3.40.50.800:FF:000006">
    <property type="entry name" value="Proline--tRNA ligase"/>
    <property type="match status" value="1"/>
</dbReference>
<dbReference type="FunFam" id="3.90.960.10:FF:000001">
    <property type="entry name" value="Proline--tRNA ligase"/>
    <property type="match status" value="1"/>
</dbReference>
<dbReference type="Gene3D" id="3.40.50.800">
    <property type="entry name" value="Anticodon-binding domain"/>
    <property type="match status" value="1"/>
</dbReference>
<dbReference type="Gene3D" id="3.30.930.10">
    <property type="entry name" value="Bira Bifunctional Protein, Domain 2"/>
    <property type="match status" value="2"/>
</dbReference>
<dbReference type="HAMAP" id="MF_01569">
    <property type="entry name" value="Pro_tRNA_synth_type1"/>
    <property type="match status" value="1"/>
</dbReference>
<dbReference type="InterPro" id="IPR002314">
    <property type="entry name" value="aa-tRNA-synt_IIb"/>
</dbReference>
<dbReference type="InterPro" id="IPR006195">
    <property type="entry name" value="aa-tRNA-synth_II"/>
</dbReference>
<dbReference type="InterPro" id="IPR045864">
    <property type="entry name" value="aa-tRNA-synth_II/BPL/LPL"/>
</dbReference>
<dbReference type="InterPro" id="IPR004154">
    <property type="entry name" value="Anticodon-bd"/>
</dbReference>
<dbReference type="InterPro" id="IPR036621">
    <property type="entry name" value="Anticodon-bd_dom_sf"/>
</dbReference>
<dbReference type="InterPro" id="IPR002316">
    <property type="entry name" value="Pro-tRNA-ligase_IIa"/>
</dbReference>
<dbReference type="InterPro" id="IPR004500">
    <property type="entry name" value="Pro-tRNA-synth_IIa_bac-type"/>
</dbReference>
<dbReference type="InterPro" id="IPR023717">
    <property type="entry name" value="Pro-tRNA-Synthase_IIa_type1"/>
</dbReference>
<dbReference type="InterPro" id="IPR050062">
    <property type="entry name" value="Pro-tRNA_synthetase"/>
</dbReference>
<dbReference type="InterPro" id="IPR044140">
    <property type="entry name" value="ProRS_anticodon_short"/>
</dbReference>
<dbReference type="InterPro" id="IPR033730">
    <property type="entry name" value="ProRS_core_prok"/>
</dbReference>
<dbReference type="InterPro" id="IPR036754">
    <property type="entry name" value="YbaK/aa-tRNA-synt-asso_dom_sf"/>
</dbReference>
<dbReference type="InterPro" id="IPR007214">
    <property type="entry name" value="YbaK/aa-tRNA-synth-assoc-dom"/>
</dbReference>
<dbReference type="NCBIfam" id="NF006625">
    <property type="entry name" value="PRK09194.1"/>
    <property type="match status" value="1"/>
</dbReference>
<dbReference type="NCBIfam" id="TIGR00409">
    <property type="entry name" value="proS_fam_II"/>
    <property type="match status" value="1"/>
</dbReference>
<dbReference type="PANTHER" id="PTHR42753">
    <property type="entry name" value="MITOCHONDRIAL RIBOSOME PROTEIN L39/PROLYL-TRNA LIGASE FAMILY MEMBER"/>
    <property type="match status" value="1"/>
</dbReference>
<dbReference type="PANTHER" id="PTHR42753:SF2">
    <property type="entry name" value="PROLINE--TRNA LIGASE"/>
    <property type="match status" value="1"/>
</dbReference>
<dbReference type="Pfam" id="PF03129">
    <property type="entry name" value="HGTP_anticodon"/>
    <property type="match status" value="1"/>
</dbReference>
<dbReference type="Pfam" id="PF00587">
    <property type="entry name" value="tRNA-synt_2b"/>
    <property type="match status" value="1"/>
</dbReference>
<dbReference type="Pfam" id="PF04073">
    <property type="entry name" value="tRNA_edit"/>
    <property type="match status" value="1"/>
</dbReference>
<dbReference type="PIRSF" id="PIRSF001535">
    <property type="entry name" value="ProRS_1"/>
    <property type="match status" value="1"/>
</dbReference>
<dbReference type="PRINTS" id="PR01046">
    <property type="entry name" value="TRNASYNTHPRO"/>
</dbReference>
<dbReference type="SUPFAM" id="SSF52954">
    <property type="entry name" value="Class II aaRS ABD-related"/>
    <property type="match status" value="1"/>
</dbReference>
<dbReference type="SUPFAM" id="SSF55681">
    <property type="entry name" value="Class II aaRS and biotin synthetases"/>
    <property type="match status" value="1"/>
</dbReference>
<dbReference type="SUPFAM" id="SSF55826">
    <property type="entry name" value="YbaK/ProRS associated domain"/>
    <property type="match status" value="1"/>
</dbReference>
<dbReference type="PROSITE" id="PS50862">
    <property type="entry name" value="AA_TRNA_LIGASE_II"/>
    <property type="match status" value="1"/>
</dbReference>
<gene>
    <name evidence="1" type="primary">proS</name>
    <name type="ordered locus">PM1370</name>
</gene>
<proteinExistence type="inferred from homology"/>
<comment type="function">
    <text evidence="1">Catalyzes the attachment of proline to tRNA(Pro) in a two-step reaction: proline is first activated by ATP to form Pro-AMP and then transferred to the acceptor end of tRNA(Pro). As ProRS can inadvertently accommodate and process non-cognate amino acids such as alanine and cysteine, to avoid such errors it has two additional distinct editing activities against alanine. One activity is designated as 'pretransfer' editing and involves the tRNA(Pro)-independent hydrolysis of activated Ala-AMP. The other activity is designated 'posttransfer' editing and involves deacylation of mischarged Ala-tRNA(Pro). The misacylated Cys-tRNA(Pro) is not edited by ProRS.</text>
</comment>
<comment type="catalytic activity">
    <reaction evidence="1">
        <text>tRNA(Pro) + L-proline + ATP = L-prolyl-tRNA(Pro) + AMP + diphosphate</text>
        <dbReference type="Rhea" id="RHEA:14305"/>
        <dbReference type="Rhea" id="RHEA-COMP:9700"/>
        <dbReference type="Rhea" id="RHEA-COMP:9702"/>
        <dbReference type="ChEBI" id="CHEBI:30616"/>
        <dbReference type="ChEBI" id="CHEBI:33019"/>
        <dbReference type="ChEBI" id="CHEBI:60039"/>
        <dbReference type="ChEBI" id="CHEBI:78442"/>
        <dbReference type="ChEBI" id="CHEBI:78532"/>
        <dbReference type="ChEBI" id="CHEBI:456215"/>
        <dbReference type="EC" id="6.1.1.15"/>
    </reaction>
</comment>
<comment type="subunit">
    <text evidence="1">Homodimer.</text>
</comment>
<comment type="subcellular location">
    <subcellularLocation>
        <location evidence="1">Cytoplasm</location>
    </subcellularLocation>
</comment>
<comment type="domain">
    <text evidence="1">Consists of three domains: the N-terminal catalytic domain, the editing domain and the C-terminal anticodon-binding domain.</text>
</comment>
<comment type="similarity">
    <text evidence="1">Belongs to the class-II aminoacyl-tRNA synthetase family. ProS type 1 subfamily.</text>
</comment>
<evidence type="ECO:0000255" key="1">
    <source>
        <dbReference type="HAMAP-Rule" id="MF_01569"/>
    </source>
</evidence>
<sequence>MRTSQYLFSTLKETPAEASIVSHQLMLRAGMIRPLASGLYTWLPTGLRVLNKVEKIIREEMDKSGALEVKMAVTQPAELWQESGRWEEYGPELLRFKDRGERDFVIGPTNEEVITDLVRRELSSYKQLPLNLYHIQTKFRDEVRPRFGVMRSREFVMKDAYSFHTTHECLQKTYDVMYETYSNIFNRLGLDFRAVQADTGSIGGSASHEFQVLAQSGEDDVVFSTESDFAANIELAEAVALGERGAATEELRVVDTPNAKTIAELVEQFNQPIEKTVKTLVVHATEESGHKLVALLVRGDHELNEIKAEKVDIVASPLQFATDEEIRAVVGAGTGSLGPINLPMPIVIDRTVANMDNFSAGANQDGKHYFGINWERDLPVPHIADLRNVVEGDPSPDGKGVLQIKRGIEVGHIFQLGTKYSAAMNATVQGEDGRPQTMIMGCYGIGVTRVIAAAIEQHHDERGIIWPDNIAPFKVAIVPMNMHKSESVQQFAEELYRTLTAQGVEVIFDDRKERPGVMFADMELIGVPHMIVIGEKNLEKGEIEYKYRRSGEKEMIAKDQLLDVLKAKFAS</sequence>